<gene>
    <name evidence="1" type="primary">mdh</name>
    <name type="ordered locus">CTLon_0628</name>
</gene>
<feature type="chain" id="PRO_1000191617" description="Malate dehydrogenase">
    <location>
        <begin position="1"/>
        <end position="326"/>
    </location>
</feature>
<feature type="active site" description="Proton acceptor" evidence="1">
    <location>
        <position position="188"/>
    </location>
</feature>
<feature type="binding site" evidence="1">
    <location>
        <begin position="12"/>
        <end position="18"/>
    </location>
    <ligand>
        <name>NAD(+)</name>
        <dbReference type="ChEBI" id="CHEBI:57540"/>
    </ligand>
</feature>
<feature type="binding site" evidence="1">
    <location>
        <position position="93"/>
    </location>
    <ligand>
        <name>substrate</name>
    </ligand>
</feature>
<feature type="binding site" evidence="1">
    <location>
        <position position="99"/>
    </location>
    <ligand>
        <name>substrate</name>
    </ligand>
</feature>
<feature type="binding site" evidence="1">
    <location>
        <position position="106"/>
    </location>
    <ligand>
        <name>NAD(+)</name>
        <dbReference type="ChEBI" id="CHEBI:57540"/>
    </ligand>
</feature>
<feature type="binding site" evidence="1">
    <location>
        <position position="113"/>
    </location>
    <ligand>
        <name>NAD(+)</name>
        <dbReference type="ChEBI" id="CHEBI:57540"/>
    </ligand>
</feature>
<feature type="binding site" evidence="1">
    <location>
        <begin position="130"/>
        <end position="132"/>
    </location>
    <ligand>
        <name>NAD(+)</name>
        <dbReference type="ChEBI" id="CHEBI:57540"/>
    </ligand>
</feature>
<feature type="binding site" evidence="1">
    <location>
        <position position="132"/>
    </location>
    <ligand>
        <name>substrate</name>
    </ligand>
</feature>
<feature type="binding site" evidence="1">
    <location>
        <position position="163"/>
    </location>
    <ligand>
        <name>substrate</name>
    </ligand>
</feature>
<organism>
    <name type="scientific">Chlamydia trachomatis serovar L2b (strain UCH-1/proctitis)</name>
    <dbReference type="NCBI Taxonomy" id="471473"/>
    <lineage>
        <taxon>Bacteria</taxon>
        <taxon>Pseudomonadati</taxon>
        <taxon>Chlamydiota</taxon>
        <taxon>Chlamydiia</taxon>
        <taxon>Chlamydiales</taxon>
        <taxon>Chlamydiaceae</taxon>
        <taxon>Chlamydia/Chlamydophila group</taxon>
        <taxon>Chlamydia</taxon>
    </lineage>
</organism>
<evidence type="ECO:0000255" key="1">
    <source>
        <dbReference type="HAMAP-Rule" id="MF_01517"/>
    </source>
</evidence>
<reference key="1">
    <citation type="journal article" date="2008" name="Genome Res.">
        <title>Chlamydia trachomatis: genome sequence analysis of lymphogranuloma venereum isolates.</title>
        <authorList>
            <person name="Thomson N.R."/>
            <person name="Holden M.T.G."/>
            <person name="Carder C."/>
            <person name="Lennard N."/>
            <person name="Lockey S.J."/>
            <person name="Marsh P."/>
            <person name="Skipp P."/>
            <person name="O'Connor C.D."/>
            <person name="Goodhead I."/>
            <person name="Norbertzcak H."/>
            <person name="Harris B."/>
            <person name="Ormond D."/>
            <person name="Rance R."/>
            <person name="Quail M.A."/>
            <person name="Parkhill J."/>
            <person name="Stephens R.S."/>
            <person name="Clarke I.N."/>
        </authorList>
    </citation>
    <scope>NUCLEOTIDE SEQUENCE [LARGE SCALE GENOMIC DNA]</scope>
    <source>
        <strain>UCH-1/proctitis</strain>
    </source>
</reference>
<name>MDH_CHLTB</name>
<proteinExistence type="inferred from homology"/>
<comment type="function">
    <text evidence="1">Catalyzes the reversible oxidation of malate to oxaloacetate.</text>
</comment>
<comment type="catalytic activity">
    <reaction evidence="1">
        <text>(S)-malate + NAD(+) = oxaloacetate + NADH + H(+)</text>
        <dbReference type="Rhea" id="RHEA:21432"/>
        <dbReference type="ChEBI" id="CHEBI:15378"/>
        <dbReference type="ChEBI" id="CHEBI:15589"/>
        <dbReference type="ChEBI" id="CHEBI:16452"/>
        <dbReference type="ChEBI" id="CHEBI:57540"/>
        <dbReference type="ChEBI" id="CHEBI:57945"/>
        <dbReference type="EC" id="1.1.1.37"/>
    </reaction>
</comment>
<comment type="similarity">
    <text evidence="1">Belongs to the LDH/MDH superfamily. MDH type 2 family.</text>
</comment>
<protein>
    <recommendedName>
        <fullName evidence="1">Malate dehydrogenase</fullName>
        <ecNumber evidence="1">1.1.1.37</ecNumber>
    </recommendedName>
</protein>
<keyword id="KW-0520">NAD</keyword>
<keyword id="KW-0560">Oxidoreductase</keyword>
<keyword id="KW-0816">Tricarboxylic acid cycle</keyword>
<sequence length="326" mass="35561">MVSQTVSVAVTGGTGQIAYSFLFSLAHGDVFGLDCGIDLRIYDIPGTERALSGVRMELDDGAFPLLQRVQVTTSLHDAFDGIDAAFLIGSVPRGPGMERRDLLKKNGEIVATQGKALNTTAKRDAKIFVVGNPVNTNCWIAMNHAPRLLRKNFHAMLRLDQNRMHSMLSHRAEVPLSAVSQVVVWGNHSAKQVPDFTQALINDRPIAETIADRDWLENIMVPSVQSRGSAVIEARGKSSAASAARALAEAARSIYQPKEGEWFSSGVCSDHNPYGLPEDLIFGFPCRMLATGEYEVIPGLPWDAFIRGKMQISLDEILQEKASVSL</sequence>
<accession>B0BC10</accession>
<dbReference type="EC" id="1.1.1.37" evidence="1"/>
<dbReference type="EMBL" id="AM884177">
    <property type="protein sequence ID" value="CAP07025.1"/>
    <property type="molecule type" value="Genomic_DNA"/>
</dbReference>
<dbReference type="RefSeq" id="WP_009873767.1">
    <property type="nucleotide sequence ID" value="NC_010280.2"/>
</dbReference>
<dbReference type="SMR" id="B0BC10"/>
<dbReference type="KEGG" id="ctl:CTLon_0628"/>
<dbReference type="HOGENOM" id="CLU_040727_2_0_0"/>
<dbReference type="Proteomes" id="UP001154401">
    <property type="component" value="Chromosome"/>
</dbReference>
<dbReference type="GO" id="GO:0030060">
    <property type="term" value="F:L-malate dehydrogenase (NAD+) activity"/>
    <property type="evidence" value="ECO:0007669"/>
    <property type="project" value="UniProtKB-UniRule"/>
</dbReference>
<dbReference type="GO" id="GO:0006108">
    <property type="term" value="P:malate metabolic process"/>
    <property type="evidence" value="ECO:0007669"/>
    <property type="project" value="InterPro"/>
</dbReference>
<dbReference type="GO" id="GO:0006099">
    <property type="term" value="P:tricarboxylic acid cycle"/>
    <property type="evidence" value="ECO:0007669"/>
    <property type="project" value="UniProtKB-UniRule"/>
</dbReference>
<dbReference type="FunFam" id="3.40.50.720:FF:000010">
    <property type="entry name" value="Malate dehydrogenase"/>
    <property type="match status" value="1"/>
</dbReference>
<dbReference type="FunFam" id="3.90.110.10:FF:000002">
    <property type="entry name" value="Malate dehydrogenase"/>
    <property type="match status" value="1"/>
</dbReference>
<dbReference type="Gene3D" id="3.90.110.10">
    <property type="entry name" value="Lactate dehydrogenase/glycoside hydrolase, family 4, C-terminal"/>
    <property type="match status" value="1"/>
</dbReference>
<dbReference type="Gene3D" id="3.40.50.720">
    <property type="entry name" value="NAD(P)-binding Rossmann-like Domain"/>
    <property type="match status" value="1"/>
</dbReference>
<dbReference type="HAMAP" id="MF_01517">
    <property type="entry name" value="Malate_dehydrog_2"/>
    <property type="match status" value="1"/>
</dbReference>
<dbReference type="InterPro" id="IPR001557">
    <property type="entry name" value="L-lactate/malate_DH"/>
</dbReference>
<dbReference type="InterPro" id="IPR022383">
    <property type="entry name" value="Lactate/malate_DH_C"/>
</dbReference>
<dbReference type="InterPro" id="IPR001236">
    <property type="entry name" value="Lactate/malate_DH_N"/>
</dbReference>
<dbReference type="InterPro" id="IPR015955">
    <property type="entry name" value="Lactate_DH/Glyco_Ohase_4_C"/>
</dbReference>
<dbReference type="InterPro" id="IPR010945">
    <property type="entry name" value="Malate_DH_type2"/>
</dbReference>
<dbReference type="InterPro" id="IPR036291">
    <property type="entry name" value="NAD(P)-bd_dom_sf"/>
</dbReference>
<dbReference type="NCBIfam" id="TIGR01759">
    <property type="entry name" value="MalateDH-SF1"/>
    <property type="match status" value="1"/>
</dbReference>
<dbReference type="NCBIfam" id="NF003916">
    <property type="entry name" value="PRK05442.1"/>
    <property type="match status" value="1"/>
</dbReference>
<dbReference type="PANTHER" id="PTHR23382">
    <property type="entry name" value="MALATE DEHYDROGENASE"/>
    <property type="match status" value="1"/>
</dbReference>
<dbReference type="Pfam" id="PF02866">
    <property type="entry name" value="Ldh_1_C"/>
    <property type="match status" value="1"/>
</dbReference>
<dbReference type="Pfam" id="PF00056">
    <property type="entry name" value="Ldh_1_N"/>
    <property type="match status" value="1"/>
</dbReference>
<dbReference type="PIRSF" id="PIRSF000102">
    <property type="entry name" value="Lac_mal_DH"/>
    <property type="match status" value="1"/>
</dbReference>
<dbReference type="SUPFAM" id="SSF56327">
    <property type="entry name" value="LDH C-terminal domain-like"/>
    <property type="match status" value="1"/>
</dbReference>
<dbReference type="SUPFAM" id="SSF51735">
    <property type="entry name" value="NAD(P)-binding Rossmann-fold domains"/>
    <property type="match status" value="1"/>
</dbReference>